<gene>
    <name evidence="1" type="primary">recO</name>
    <name type="ordered locus">SFV_2628</name>
</gene>
<dbReference type="EMBL" id="CP000266">
    <property type="protein sequence ID" value="ABF04725.1"/>
    <property type="molecule type" value="Genomic_DNA"/>
</dbReference>
<dbReference type="RefSeq" id="WP_000399397.1">
    <property type="nucleotide sequence ID" value="NC_008258.1"/>
</dbReference>
<dbReference type="SMR" id="Q0T1U0"/>
<dbReference type="KEGG" id="sfv:SFV_2628"/>
<dbReference type="HOGENOM" id="CLU_066645_1_0_6"/>
<dbReference type="Proteomes" id="UP000000659">
    <property type="component" value="Chromosome"/>
</dbReference>
<dbReference type="GO" id="GO:0043590">
    <property type="term" value="C:bacterial nucleoid"/>
    <property type="evidence" value="ECO:0007669"/>
    <property type="project" value="TreeGrafter"/>
</dbReference>
<dbReference type="GO" id="GO:0006310">
    <property type="term" value="P:DNA recombination"/>
    <property type="evidence" value="ECO:0007669"/>
    <property type="project" value="UniProtKB-UniRule"/>
</dbReference>
<dbReference type="GO" id="GO:0006302">
    <property type="term" value="P:double-strand break repair"/>
    <property type="evidence" value="ECO:0007669"/>
    <property type="project" value="TreeGrafter"/>
</dbReference>
<dbReference type="FunFam" id="1.20.1440.120:FF:000001">
    <property type="entry name" value="DNA repair protein RecO"/>
    <property type="match status" value="1"/>
</dbReference>
<dbReference type="FunFam" id="2.40.50.140:FF:000074">
    <property type="entry name" value="DNA repair protein RecO"/>
    <property type="match status" value="1"/>
</dbReference>
<dbReference type="Gene3D" id="2.40.50.140">
    <property type="entry name" value="Nucleic acid-binding proteins"/>
    <property type="match status" value="1"/>
</dbReference>
<dbReference type="Gene3D" id="1.20.1440.120">
    <property type="entry name" value="Recombination protein O, C-terminal domain"/>
    <property type="match status" value="1"/>
</dbReference>
<dbReference type="HAMAP" id="MF_00201">
    <property type="entry name" value="RecO"/>
    <property type="match status" value="1"/>
</dbReference>
<dbReference type="InterPro" id="IPR037278">
    <property type="entry name" value="ARFGAP/RecO"/>
</dbReference>
<dbReference type="InterPro" id="IPR022572">
    <property type="entry name" value="DNA_rep/recomb_RecO_N"/>
</dbReference>
<dbReference type="InterPro" id="IPR012340">
    <property type="entry name" value="NA-bd_OB-fold"/>
</dbReference>
<dbReference type="InterPro" id="IPR003717">
    <property type="entry name" value="RecO"/>
</dbReference>
<dbReference type="InterPro" id="IPR042242">
    <property type="entry name" value="RecO_C"/>
</dbReference>
<dbReference type="NCBIfam" id="TIGR00613">
    <property type="entry name" value="reco"/>
    <property type="match status" value="1"/>
</dbReference>
<dbReference type="PANTHER" id="PTHR33991">
    <property type="entry name" value="DNA REPAIR PROTEIN RECO"/>
    <property type="match status" value="1"/>
</dbReference>
<dbReference type="PANTHER" id="PTHR33991:SF1">
    <property type="entry name" value="DNA REPAIR PROTEIN RECO"/>
    <property type="match status" value="1"/>
</dbReference>
<dbReference type="Pfam" id="PF02565">
    <property type="entry name" value="RecO_C"/>
    <property type="match status" value="1"/>
</dbReference>
<dbReference type="Pfam" id="PF11967">
    <property type="entry name" value="RecO_N"/>
    <property type="match status" value="1"/>
</dbReference>
<dbReference type="SUPFAM" id="SSF57863">
    <property type="entry name" value="ArfGap/RecO-like zinc finger"/>
    <property type="match status" value="1"/>
</dbReference>
<dbReference type="SUPFAM" id="SSF50249">
    <property type="entry name" value="Nucleic acid-binding proteins"/>
    <property type="match status" value="1"/>
</dbReference>
<accession>Q0T1U0</accession>
<name>RECO_SHIF8</name>
<comment type="function">
    <text evidence="1">Involved in DNA repair and RecF pathway recombination.</text>
</comment>
<comment type="subunit">
    <text evidence="1">Monomer.</text>
</comment>
<comment type="similarity">
    <text evidence="1">Belongs to the RecO family.</text>
</comment>
<organism>
    <name type="scientific">Shigella flexneri serotype 5b (strain 8401)</name>
    <dbReference type="NCBI Taxonomy" id="373384"/>
    <lineage>
        <taxon>Bacteria</taxon>
        <taxon>Pseudomonadati</taxon>
        <taxon>Pseudomonadota</taxon>
        <taxon>Gammaproteobacteria</taxon>
        <taxon>Enterobacterales</taxon>
        <taxon>Enterobacteriaceae</taxon>
        <taxon>Shigella</taxon>
    </lineage>
</organism>
<feature type="chain" id="PRO_1000012156" description="DNA repair protein RecO">
    <location>
        <begin position="1"/>
        <end position="242"/>
    </location>
</feature>
<protein>
    <recommendedName>
        <fullName evidence="1">DNA repair protein RecO</fullName>
    </recommendedName>
    <alternativeName>
        <fullName evidence="1">Recombination protein O</fullName>
    </alternativeName>
</protein>
<keyword id="KW-0227">DNA damage</keyword>
<keyword id="KW-0233">DNA recombination</keyword>
<keyword id="KW-0234">DNA repair</keyword>
<reference key="1">
    <citation type="journal article" date="2006" name="BMC Genomics">
        <title>Complete genome sequence of Shigella flexneri 5b and comparison with Shigella flexneri 2a.</title>
        <authorList>
            <person name="Nie H."/>
            <person name="Yang F."/>
            <person name="Zhang X."/>
            <person name="Yang J."/>
            <person name="Chen L."/>
            <person name="Wang J."/>
            <person name="Xiong Z."/>
            <person name="Peng J."/>
            <person name="Sun L."/>
            <person name="Dong J."/>
            <person name="Xue Y."/>
            <person name="Xu X."/>
            <person name="Chen S."/>
            <person name="Yao Z."/>
            <person name="Shen Y."/>
            <person name="Jin Q."/>
        </authorList>
    </citation>
    <scope>NUCLEOTIDE SEQUENCE [LARGE SCALE GENOMIC DNA]</scope>
    <source>
        <strain>8401</strain>
    </source>
</reference>
<proteinExistence type="inferred from homology"/>
<sequence length="242" mass="27305">MEGWQRAFVLHSRPWSETSLMLDVFTEESGRVRLVAKGARSKRSTLKGALQPFTPLLLRFGGRGEVKTLRSAEAVSLALPLSGITLYSGLYINELLSRVLEYETRFSELFFDYLHCIQSLAGATGTPEPALRRFELALLGHLGYGVNFTHCAGSGEPVDGTMTYRYREEKGFIASVVIDNKTFTGRQLKALNAREFPDADTLRAAKRFTRMALKPYLGGKPLKSRELFRQFMPKRTVKTHYE</sequence>
<evidence type="ECO:0000255" key="1">
    <source>
        <dbReference type="HAMAP-Rule" id="MF_00201"/>
    </source>
</evidence>